<reference key="1">
    <citation type="submission" date="2006-10" db="EMBL/GenBank/DDBJ databases">
        <authorList>
            <person name="Fleischmann R.D."/>
            <person name="Dodson R.J."/>
            <person name="Haft D.H."/>
            <person name="Merkel J.S."/>
            <person name="Nelson W.C."/>
            <person name="Fraser C.M."/>
        </authorList>
    </citation>
    <scope>NUCLEOTIDE SEQUENCE [LARGE SCALE GENOMIC DNA]</scope>
    <source>
        <strain>ATCC 700084 / mc(2)155</strain>
    </source>
</reference>
<reference key="2">
    <citation type="journal article" date="2007" name="Genome Biol.">
        <title>Interrupted coding sequences in Mycobacterium smegmatis: authentic mutations or sequencing errors?</title>
        <authorList>
            <person name="Deshayes C."/>
            <person name="Perrodou E."/>
            <person name="Gallien S."/>
            <person name="Euphrasie D."/>
            <person name="Schaeffer C."/>
            <person name="Van-Dorsselaer A."/>
            <person name="Poch O."/>
            <person name="Lecompte O."/>
            <person name="Reyrat J.-M."/>
        </authorList>
    </citation>
    <scope>NUCLEOTIDE SEQUENCE [LARGE SCALE GENOMIC DNA]</scope>
    <source>
        <strain>ATCC 700084 / mc(2)155</strain>
    </source>
</reference>
<reference key="3">
    <citation type="journal article" date="2009" name="Genome Res.">
        <title>Ortho-proteogenomics: multiple proteomes investigation through orthology and a new MS-based protocol.</title>
        <authorList>
            <person name="Gallien S."/>
            <person name="Perrodou E."/>
            <person name="Carapito C."/>
            <person name="Deshayes C."/>
            <person name="Reyrat J.-M."/>
            <person name="Van Dorsselaer A."/>
            <person name="Poch O."/>
            <person name="Schaeffer C."/>
            <person name="Lecompte O."/>
        </authorList>
    </citation>
    <scope>NUCLEOTIDE SEQUENCE [LARGE SCALE GENOMIC DNA]</scope>
    <source>
        <strain>ATCC 700084 / mc(2)155</strain>
    </source>
</reference>
<reference key="4">
    <citation type="journal article" date="2010" name="Mol. Biosyst.">
        <title>Expansion of the mycobacterial 'PUPylome'.</title>
        <authorList>
            <person name="Watrous J."/>
            <person name="Burns K."/>
            <person name="Liu W.T."/>
            <person name="Patel A."/>
            <person name="Hook V."/>
            <person name="Bafna V."/>
            <person name="Barry C.E. III"/>
            <person name="Bark S."/>
            <person name="Dorrestein P.C."/>
        </authorList>
    </citation>
    <scope>PUPYLATION AT LYS-363</scope>
    <scope>IDENTIFICATION BY MASS SPECTROMETRY</scope>
</reference>
<organism>
    <name type="scientific">Mycolicibacterium smegmatis (strain ATCC 700084 / mc(2)155)</name>
    <name type="common">Mycobacterium smegmatis</name>
    <dbReference type="NCBI Taxonomy" id="246196"/>
    <lineage>
        <taxon>Bacteria</taxon>
        <taxon>Bacillati</taxon>
        <taxon>Actinomycetota</taxon>
        <taxon>Actinomycetes</taxon>
        <taxon>Mycobacteriales</taxon>
        <taxon>Mycobacteriaceae</taxon>
        <taxon>Mycolicibacterium</taxon>
    </lineage>
</organism>
<comment type="function">
    <text evidence="2">Glutamine synthetase (GS) is an unusual multitasking protein that functions as an enzyme, a transcription coregulator, and a chaperone in ammonium assimilation and in the regulation of genes involved in nitrogen metabolism. It catalyzes the ATP-dependent biosynthesis of glutamine from glutamate and ammonia. Feedback-inhibited GlnA also interacts with and regulates the activity of the transcriptional regulator TnrA. During nitrogen limitation, TnrA is in its DNA-binding active state and turns on the transcription of genes required for nitrogen assimilation. Under conditions of nitrogen excess, feedback-inhibited GlnA forms a stable complex with TnrA, which inhibits its DNA-binding activity. In contrast, feedback-inhibited GlnA acts as a chaperone to stabilize the DNA-binding activity of GlnR, which represses the transcription of nitrogen assimilation genes.</text>
</comment>
<comment type="catalytic activity">
    <reaction evidence="2">
        <text>L-glutamate + NH4(+) + ATP = L-glutamine + ADP + phosphate + H(+)</text>
        <dbReference type="Rhea" id="RHEA:16169"/>
        <dbReference type="ChEBI" id="CHEBI:15378"/>
        <dbReference type="ChEBI" id="CHEBI:28938"/>
        <dbReference type="ChEBI" id="CHEBI:29985"/>
        <dbReference type="ChEBI" id="CHEBI:30616"/>
        <dbReference type="ChEBI" id="CHEBI:43474"/>
        <dbReference type="ChEBI" id="CHEBI:58359"/>
        <dbReference type="ChEBI" id="CHEBI:456216"/>
        <dbReference type="EC" id="6.3.1.2"/>
    </reaction>
</comment>
<comment type="cofactor">
    <cofactor evidence="2">
        <name>Mg(2+)</name>
        <dbReference type="ChEBI" id="CHEBI:18420"/>
    </cofactor>
    <text evidence="2">Binds 2 Mg(2+) ions per subunit.</text>
</comment>
<comment type="activity regulation">
    <text evidence="2">Inhibited by glutamine.</text>
</comment>
<comment type="subunit">
    <text evidence="2">Oligomer of 12 subunits arranged in the form of two hexagons. In its feedback-inhibited form, interacts with TnrA in order to block its DNA-binding activity.</text>
</comment>
<comment type="subcellular location">
    <subcellularLocation>
        <location evidence="2">Cytoplasm</location>
    </subcellularLocation>
</comment>
<comment type="similarity">
    <text evidence="8">Belongs to the glutamine synthetase family.</text>
</comment>
<evidence type="ECO:0000250" key="1">
    <source>
        <dbReference type="UniProtKB" id="P0A1P6"/>
    </source>
</evidence>
<evidence type="ECO:0000250" key="2">
    <source>
        <dbReference type="UniProtKB" id="P12425"/>
    </source>
</evidence>
<evidence type="ECO:0000250" key="3">
    <source>
        <dbReference type="UniProtKB" id="P77961"/>
    </source>
</evidence>
<evidence type="ECO:0000250" key="4">
    <source>
        <dbReference type="UniProtKB" id="P9WN39"/>
    </source>
</evidence>
<evidence type="ECO:0000255" key="5">
    <source>
        <dbReference type="PROSITE-ProRule" id="PRU01330"/>
    </source>
</evidence>
<evidence type="ECO:0000255" key="6">
    <source>
        <dbReference type="PROSITE-ProRule" id="PRU01331"/>
    </source>
</evidence>
<evidence type="ECO:0000269" key="7">
    <source>
    </source>
</evidence>
<evidence type="ECO:0000305" key="8"/>
<accession>A0R083</accession>
<accession>I7FGW9</accession>
<name>GLN1A_MYCS2</name>
<gene>
    <name evidence="2" type="primary">glnA</name>
    <name type="synonym">glnA2</name>
    <name type="ordered locus">MSMEG_4294</name>
    <name type="ordered locus">MSMEI_4193</name>
</gene>
<proteinExistence type="evidence at protein level"/>
<protein>
    <recommendedName>
        <fullName evidence="2">Glutamine synthetase</fullName>
        <shortName evidence="2">GS</shortName>
        <ecNumber evidence="2">6.3.1.2</ecNumber>
    </recommendedName>
    <alternativeName>
        <fullName evidence="2">Glutamate--ammonia ligase</fullName>
    </alternativeName>
    <alternativeName>
        <fullName evidence="2">Glutamine synthetase I alpha</fullName>
        <shortName evidence="2">GSI alpha</shortName>
    </alternativeName>
</protein>
<dbReference type="EC" id="6.3.1.2" evidence="2"/>
<dbReference type="EMBL" id="CP000480">
    <property type="protein sequence ID" value="ABK76204.1"/>
    <property type="molecule type" value="Genomic_DNA"/>
</dbReference>
<dbReference type="EMBL" id="CP001663">
    <property type="protein sequence ID" value="AFP40650.1"/>
    <property type="molecule type" value="Genomic_DNA"/>
</dbReference>
<dbReference type="RefSeq" id="WP_011729709.1">
    <property type="nucleotide sequence ID" value="NZ_SIJM01000003.1"/>
</dbReference>
<dbReference type="RefSeq" id="YP_888571.1">
    <property type="nucleotide sequence ID" value="NC_008596.1"/>
</dbReference>
<dbReference type="SMR" id="A0R083"/>
<dbReference type="STRING" id="246196.MSMEG_4294"/>
<dbReference type="PaxDb" id="246196-MSMEI_4193"/>
<dbReference type="GeneID" id="93459012"/>
<dbReference type="KEGG" id="msb:LJ00_21285"/>
<dbReference type="KEGG" id="msg:MSMEI_4193"/>
<dbReference type="KEGG" id="msm:MSMEG_4294"/>
<dbReference type="PATRIC" id="fig|246196.19.peg.4214"/>
<dbReference type="eggNOG" id="COG0174">
    <property type="taxonomic scope" value="Bacteria"/>
</dbReference>
<dbReference type="OrthoDB" id="9807095at2"/>
<dbReference type="Proteomes" id="UP000000757">
    <property type="component" value="Chromosome"/>
</dbReference>
<dbReference type="Proteomes" id="UP000006158">
    <property type="component" value="Chromosome"/>
</dbReference>
<dbReference type="GO" id="GO:0005737">
    <property type="term" value="C:cytoplasm"/>
    <property type="evidence" value="ECO:0007669"/>
    <property type="project" value="UniProtKB-SubCell"/>
</dbReference>
<dbReference type="GO" id="GO:0005524">
    <property type="term" value="F:ATP binding"/>
    <property type="evidence" value="ECO:0007669"/>
    <property type="project" value="UniProtKB-KW"/>
</dbReference>
<dbReference type="GO" id="GO:0004356">
    <property type="term" value="F:glutamine synthetase activity"/>
    <property type="evidence" value="ECO:0007669"/>
    <property type="project" value="UniProtKB-EC"/>
</dbReference>
<dbReference type="GO" id="GO:0046872">
    <property type="term" value="F:metal ion binding"/>
    <property type="evidence" value="ECO:0007669"/>
    <property type="project" value="UniProtKB-KW"/>
</dbReference>
<dbReference type="GO" id="GO:0006542">
    <property type="term" value="P:glutamine biosynthetic process"/>
    <property type="evidence" value="ECO:0007669"/>
    <property type="project" value="InterPro"/>
</dbReference>
<dbReference type="FunFam" id="3.30.590.10:FF:000003">
    <property type="entry name" value="Glutamine synthetase 2"/>
    <property type="match status" value="1"/>
</dbReference>
<dbReference type="FunFam" id="3.10.20.70:FF:000002">
    <property type="entry name" value="Glutamine synthetase I"/>
    <property type="match status" value="1"/>
</dbReference>
<dbReference type="Gene3D" id="3.10.20.70">
    <property type="entry name" value="Glutamine synthetase, N-terminal domain"/>
    <property type="match status" value="1"/>
</dbReference>
<dbReference type="Gene3D" id="3.30.590.10">
    <property type="entry name" value="Glutamine synthetase/guanido kinase, catalytic domain"/>
    <property type="match status" value="1"/>
</dbReference>
<dbReference type="InterPro" id="IPR008147">
    <property type="entry name" value="Gln_synt_N"/>
</dbReference>
<dbReference type="InterPro" id="IPR036651">
    <property type="entry name" value="Gln_synt_N_sf"/>
</dbReference>
<dbReference type="InterPro" id="IPR014746">
    <property type="entry name" value="Gln_synth/guanido_kin_cat_dom"/>
</dbReference>
<dbReference type="InterPro" id="IPR008146">
    <property type="entry name" value="Gln_synth_cat_dom"/>
</dbReference>
<dbReference type="InterPro" id="IPR027303">
    <property type="entry name" value="Gln_synth_gly_rich_site"/>
</dbReference>
<dbReference type="InterPro" id="IPR004809">
    <property type="entry name" value="Gln_synth_I"/>
</dbReference>
<dbReference type="NCBIfam" id="TIGR00653">
    <property type="entry name" value="GlnA"/>
    <property type="match status" value="1"/>
</dbReference>
<dbReference type="PANTHER" id="PTHR43785:SF11">
    <property type="entry name" value="GAMMA-GLUTAMYLPOLYAMINE SYNTHETASE GLNA2"/>
    <property type="match status" value="1"/>
</dbReference>
<dbReference type="PANTHER" id="PTHR43785">
    <property type="entry name" value="GAMMA-GLUTAMYLPUTRESCINE SYNTHETASE"/>
    <property type="match status" value="1"/>
</dbReference>
<dbReference type="Pfam" id="PF00120">
    <property type="entry name" value="Gln-synt_C"/>
    <property type="match status" value="1"/>
</dbReference>
<dbReference type="Pfam" id="PF03951">
    <property type="entry name" value="Gln-synt_N"/>
    <property type="match status" value="1"/>
</dbReference>
<dbReference type="SMART" id="SM01230">
    <property type="entry name" value="Gln-synt_C"/>
    <property type="match status" value="1"/>
</dbReference>
<dbReference type="SUPFAM" id="SSF54368">
    <property type="entry name" value="Glutamine synthetase, N-terminal domain"/>
    <property type="match status" value="1"/>
</dbReference>
<dbReference type="SUPFAM" id="SSF55931">
    <property type="entry name" value="Glutamine synthetase/guanido kinase"/>
    <property type="match status" value="1"/>
</dbReference>
<dbReference type="PROSITE" id="PS00181">
    <property type="entry name" value="GLNA_ATP"/>
    <property type="match status" value="1"/>
</dbReference>
<dbReference type="PROSITE" id="PS51986">
    <property type="entry name" value="GS_BETA_GRASP"/>
    <property type="match status" value="1"/>
</dbReference>
<dbReference type="PROSITE" id="PS51987">
    <property type="entry name" value="GS_CATALYTIC"/>
    <property type="match status" value="1"/>
</dbReference>
<keyword id="KW-0067">ATP-binding</keyword>
<keyword id="KW-0963">Cytoplasm</keyword>
<keyword id="KW-1017">Isopeptide bond</keyword>
<keyword id="KW-0436">Ligase</keyword>
<keyword id="KW-0460">Magnesium</keyword>
<keyword id="KW-0479">Metal-binding</keyword>
<keyword id="KW-0547">Nucleotide-binding</keyword>
<keyword id="KW-1185">Reference proteome</keyword>
<keyword id="KW-0832">Ubl conjugation</keyword>
<feature type="chain" id="PRO_0000396821" description="Glutamine synthetase">
    <location>
        <begin position="1"/>
        <end position="446"/>
    </location>
</feature>
<feature type="domain" description="GS beta-grasp" evidence="5">
    <location>
        <begin position="15"/>
        <end position="102"/>
    </location>
</feature>
<feature type="domain" description="GS catalytic" evidence="6">
    <location>
        <begin position="109"/>
        <end position="446"/>
    </location>
</feature>
<feature type="binding site" evidence="2">
    <location>
        <position position="132"/>
    </location>
    <ligand>
        <name>Mg(2+)</name>
        <dbReference type="ChEBI" id="CHEBI:18420"/>
        <label>1</label>
    </ligand>
</feature>
<feature type="binding site" evidence="2">
    <location>
        <position position="134"/>
    </location>
    <ligand>
        <name>Mg(2+)</name>
        <dbReference type="ChEBI" id="CHEBI:18420"/>
        <label>2</label>
    </ligand>
</feature>
<feature type="binding site" evidence="4">
    <location>
        <position position="184"/>
    </location>
    <ligand>
        <name>ATP</name>
        <dbReference type="ChEBI" id="CHEBI:30616"/>
    </ligand>
</feature>
<feature type="binding site" evidence="2">
    <location>
        <position position="189"/>
    </location>
    <ligand>
        <name>Mg(2+)</name>
        <dbReference type="ChEBI" id="CHEBI:18420"/>
        <label>2</label>
    </ligand>
</feature>
<feature type="binding site" evidence="2">
    <location>
        <position position="196"/>
    </location>
    <ligand>
        <name>Mg(2+)</name>
        <dbReference type="ChEBI" id="CHEBI:18420"/>
        <label>2</label>
    </ligand>
</feature>
<feature type="binding site" evidence="2">
    <location>
        <position position="241"/>
    </location>
    <ligand>
        <name>L-glutamate</name>
        <dbReference type="ChEBI" id="CHEBI:29985"/>
    </ligand>
</feature>
<feature type="binding site" evidence="2">
    <location>
        <position position="245"/>
    </location>
    <ligand>
        <name>Mg(2+)</name>
        <dbReference type="ChEBI" id="CHEBI:18420"/>
        <label>1</label>
    </ligand>
</feature>
<feature type="binding site" evidence="4">
    <location>
        <begin position="247"/>
        <end position="249"/>
    </location>
    <ligand>
        <name>ATP</name>
        <dbReference type="ChEBI" id="CHEBI:30616"/>
    </ligand>
</feature>
<feature type="binding site" evidence="3">
    <location>
        <position position="249"/>
    </location>
    <ligand>
        <name>ATP</name>
        <dbReference type="ChEBI" id="CHEBI:30616"/>
    </ligand>
</feature>
<feature type="binding site" evidence="1">
    <location>
        <position position="298"/>
    </location>
    <ligand>
        <name>L-glutamate</name>
        <dbReference type="ChEBI" id="CHEBI:29985"/>
    </ligand>
</feature>
<feature type="binding site" evidence="1">
    <location>
        <position position="304"/>
    </location>
    <ligand>
        <name>L-glutamate</name>
        <dbReference type="ChEBI" id="CHEBI:29985"/>
    </ligand>
</feature>
<feature type="binding site" evidence="4">
    <location>
        <position position="316"/>
    </location>
    <ligand>
        <name>ATP</name>
        <dbReference type="ChEBI" id="CHEBI:30616"/>
    </ligand>
</feature>
<feature type="binding site" evidence="4">
    <location>
        <position position="316"/>
    </location>
    <ligand>
        <name>L-glutamate</name>
        <dbReference type="ChEBI" id="CHEBI:29985"/>
    </ligand>
</feature>
<feature type="binding site" evidence="4">
    <location>
        <position position="321"/>
    </location>
    <ligand>
        <name>ATP</name>
        <dbReference type="ChEBI" id="CHEBI:30616"/>
    </ligand>
</feature>
<feature type="binding site" evidence="2">
    <location>
        <position position="336"/>
    </location>
    <ligand>
        <name>Mg(2+)</name>
        <dbReference type="ChEBI" id="CHEBI:18420"/>
        <label>1</label>
    </ligand>
</feature>
<feature type="binding site" evidence="1">
    <location>
        <position position="338"/>
    </location>
    <ligand>
        <name>L-glutamate</name>
        <dbReference type="ChEBI" id="CHEBI:29985"/>
    </ligand>
</feature>
<feature type="site" description="Important for inhibition by glutamine" evidence="2">
    <location>
        <position position="61"/>
    </location>
</feature>
<feature type="cross-link" description="Isoglutamyl lysine isopeptide (Lys-Gln) (interchain with Q-Cter in protein Pup)" evidence="7">
    <location>
        <position position="363"/>
    </location>
</feature>
<sequence>MDRQKEFVLRTLEERDIRFVRLWFTDVLGYLKSVAIAPAELEGAFEEGIGFDGSSIEGFARVFESDTVARPDPSTFQVLPWKTSDGNHYSARMFCDITMPDGSPSWADSRHVLRRQLAKASDLGFTCYVHPEIEFFLLKPGPNDGTPPEPADNGGYFDQAVHDAAPNFRRHAIEALEQMGISVEFSHHEGAPGQQEIDLRYADALSMADNVMTFRYLVKEVALADGVRASFMPKPFAEHPGSAMHTHMSLFEGDTNAFHSPDDPLQLSDVAKSFIAGILEHANEISAVTNQWVNSYKRLVHGGEAPTAASWGAANRSALVRVPMYTPHKVSSRRVEVRSPDSACNPYLTFAVLLAAGLRGVEKGYVLGPQAEDNVWSLTQEERRAMGYRELPTSLGNALESMENSELVAEALGEHVFDYFLRNKRSEWENYRSHVTPYELKNYLSL</sequence>